<name>CS81_CONTE</name>
<comment type="subcellular location">
    <subcellularLocation>
        <location evidence="1">Secreted</location>
    </subcellularLocation>
</comment>
<comment type="tissue specificity">
    <text>Expressed by the venom duct.</text>
</comment>
<comment type="domain">
    <text>The cysteine framework is VIII (C-C-C-C-C-C-C-C-C-C).</text>
</comment>
<comment type="PTM">
    <text evidence="3">Contains 5 disulfide bonds.</text>
</comment>
<comment type="similarity">
    <text evidence="3">Belongs to the conotoxin S superfamily.</text>
</comment>
<dbReference type="EMBL" id="EU496106">
    <property type="protein sequence ID" value="ACA63846.1"/>
    <property type="molecule type" value="mRNA"/>
</dbReference>
<dbReference type="ConoServer" id="2821">
    <property type="toxin name" value="Tx8.1 precursor"/>
</dbReference>
<dbReference type="GO" id="GO:0005576">
    <property type="term" value="C:extracellular region"/>
    <property type="evidence" value="ECO:0007669"/>
    <property type="project" value="UniProtKB-SubCell"/>
</dbReference>
<dbReference type="GO" id="GO:0090729">
    <property type="term" value="F:toxin activity"/>
    <property type="evidence" value="ECO:0007669"/>
    <property type="project" value="UniProtKB-KW"/>
</dbReference>
<protein>
    <recommendedName>
        <fullName>Conotoxin Tx8.1</fullName>
    </recommendedName>
</protein>
<proteinExistence type="evidence at transcript level"/>
<reference key="1">
    <citation type="journal article" date="2008" name="Toxicon">
        <title>Identification of a novel S-superfamily conotoxin from vermivorous Conus caracteristicus.</title>
        <authorList>
            <person name="Liu L."/>
            <person name="Wu X."/>
            <person name="Yuan D."/>
            <person name="Chi C."/>
            <person name="Wang C."/>
        </authorList>
    </citation>
    <scope>NUCLEOTIDE SEQUENCE [MRNA]</scope>
    <source>
        <tissue>Venom duct</tissue>
    </source>
</reference>
<accession>B2CI27</accession>
<feature type="signal peptide" evidence="2">
    <location>
        <begin position="1" status="less than"/>
        <end position="19"/>
    </location>
</feature>
<feature type="propeptide" id="PRO_0000346139" evidence="1">
    <location>
        <begin position="20"/>
        <end position="44"/>
    </location>
</feature>
<feature type="peptide" id="PRO_0000346140" description="Conotoxin Tx8.1">
    <location>
        <begin position="45"/>
        <end position="84"/>
    </location>
</feature>
<feature type="non-terminal residue">
    <location>
        <position position="1"/>
    </location>
</feature>
<sequence>LKMGAMFVLLLLFTLASSHREGDIQARKTHLKSDFYRTLPRFARGCTISCGYEDNRCQGECHCPGKTNCYCTSGHHNKGCGCAC</sequence>
<evidence type="ECO:0000250" key="1"/>
<evidence type="ECO:0000255" key="2"/>
<evidence type="ECO:0000305" key="3"/>
<keyword id="KW-1015">Disulfide bond</keyword>
<keyword id="KW-0528">Neurotoxin</keyword>
<keyword id="KW-0964">Secreted</keyword>
<keyword id="KW-0732">Signal</keyword>
<keyword id="KW-0800">Toxin</keyword>
<organism>
    <name type="scientific">Conus textile</name>
    <name type="common">Cloth-of-gold cone</name>
    <dbReference type="NCBI Taxonomy" id="6494"/>
    <lineage>
        <taxon>Eukaryota</taxon>
        <taxon>Metazoa</taxon>
        <taxon>Spiralia</taxon>
        <taxon>Lophotrochozoa</taxon>
        <taxon>Mollusca</taxon>
        <taxon>Gastropoda</taxon>
        <taxon>Caenogastropoda</taxon>
        <taxon>Neogastropoda</taxon>
        <taxon>Conoidea</taxon>
        <taxon>Conidae</taxon>
        <taxon>Conus</taxon>
        <taxon>Cylinder</taxon>
    </lineage>
</organism>